<feature type="chain" id="PRO_0000005342" description="Digeranylgeranylglycerophospholipid reductase">
    <location>
        <begin position="1"/>
        <end position="391"/>
    </location>
</feature>
<feature type="binding site" evidence="1">
    <location>
        <position position="18"/>
    </location>
    <ligand>
        <name>FAD</name>
        <dbReference type="ChEBI" id="CHEBI:57692"/>
    </ligand>
</feature>
<feature type="binding site" evidence="1">
    <location>
        <position position="37"/>
    </location>
    <ligand>
        <name>FAD</name>
        <dbReference type="ChEBI" id="CHEBI:57692"/>
    </ligand>
</feature>
<feature type="binding site" evidence="1">
    <location>
        <position position="48"/>
    </location>
    <ligand>
        <name>FAD</name>
        <dbReference type="ChEBI" id="CHEBI:57692"/>
    </ligand>
</feature>
<feature type="binding site" evidence="1">
    <location>
        <position position="49"/>
    </location>
    <ligand>
        <name>FAD</name>
        <dbReference type="ChEBI" id="CHEBI:57692"/>
    </ligand>
</feature>
<feature type="binding site" evidence="1">
    <location>
        <position position="51"/>
    </location>
    <ligand>
        <name>FAD</name>
        <dbReference type="ChEBI" id="CHEBI:57692"/>
    </ligand>
</feature>
<feature type="binding site" evidence="1">
    <location>
        <position position="98"/>
    </location>
    <ligand>
        <name>FAD</name>
        <dbReference type="ChEBI" id="CHEBI:57692"/>
    </ligand>
</feature>
<feature type="binding site" evidence="1">
    <location>
        <position position="122"/>
    </location>
    <ligand>
        <name>FAD</name>
        <dbReference type="ChEBI" id="CHEBI:57692"/>
    </ligand>
</feature>
<feature type="binding site" evidence="1">
    <location>
        <position position="279"/>
    </location>
    <ligand>
        <name>FAD</name>
        <dbReference type="ChEBI" id="CHEBI:57692"/>
    </ligand>
</feature>
<feature type="binding site" evidence="1">
    <location>
        <position position="291"/>
    </location>
    <ligand>
        <name>FAD</name>
        <dbReference type="ChEBI" id="CHEBI:57692"/>
    </ligand>
</feature>
<feature type="binding site" evidence="1">
    <location>
        <position position="292"/>
    </location>
    <ligand>
        <name>FAD</name>
        <dbReference type="ChEBI" id="CHEBI:57692"/>
    </ligand>
</feature>
<protein>
    <recommendedName>
        <fullName evidence="1">Digeranylgeranylglycerophospholipid reductase</fullName>
        <shortName evidence="1">DGGGPL reductase</shortName>
        <ecNumber evidence="1">1.3.-.-</ecNumber>
    </recommendedName>
    <alternativeName>
        <fullName evidence="1">2,3-bis-O-geranylgeranylglyceryl phosphate reductase</fullName>
    </alternativeName>
    <alternativeName>
        <fullName evidence="1">Geranylgeranyl reductase</fullName>
        <shortName evidence="1">GGR</shortName>
    </alternativeName>
</protein>
<accession>Q57952</accession>
<keyword id="KW-0274">FAD</keyword>
<keyword id="KW-0285">Flavoprotein</keyword>
<keyword id="KW-0444">Lipid biosynthesis</keyword>
<keyword id="KW-0443">Lipid metabolism</keyword>
<keyword id="KW-0560">Oxidoreductase</keyword>
<keyword id="KW-0594">Phospholipid biosynthesis</keyword>
<keyword id="KW-1208">Phospholipid metabolism</keyword>
<keyword id="KW-1185">Reference proteome</keyword>
<name>GGR_METJA</name>
<organism>
    <name type="scientific">Methanocaldococcus jannaschii (strain ATCC 43067 / DSM 2661 / JAL-1 / JCM 10045 / NBRC 100440)</name>
    <name type="common">Methanococcus jannaschii</name>
    <dbReference type="NCBI Taxonomy" id="243232"/>
    <lineage>
        <taxon>Archaea</taxon>
        <taxon>Methanobacteriati</taxon>
        <taxon>Methanobacteriota</taxon>
        <taxon>Methanomada group</taxon>
        <taxon>Methanococci</taxon>
        <taxon>Methanococcales</taxon>
        <taxon>Methanocaldococcaceae</taxon>
        <taxon>Methanocaldococcus</taxon>
    </lineage>
</organism>
<comment type="function">
    <text evidence="1">Is involved in the reduction of 2,3-digeranylgeranylglycerophospholipids (unsaturated archaeols) into 2,3-diphytanylglycerophospholipids (saturated archaeols) in the biosynthesis of archaeal membrane lipids. Catalyzes the formation of archaetidic acid (2,3-di-O-phytanyl-sn-glyceryl phosphate) from 2,3-di-O-geranylgeranylglyceryl phosphate (DGGGP) via the hydrogenation of each double bond of the isoprenoid chains. Is also probably able to reduce double bonds of geranyl groups in CDP-2,3-bis-O-(geranylgeranyl)-sn-glycerol and archaetidylserine, thus acting at various stages in the biosynthesis of archaeal membrane lipids.</text>
</comment>
<comment type="catalytic activity">
    <reaction evidence="1">
        <text>a 2,3-bis-O-phytanyl-sn-glycerol 1-phospholipid + 8 A = a 2,3-bis-O-(geranylgeranyl)-sn-glycerol 1-phospholipid + 8 AH2</text>
        <dbReference type="Rhea" id="RHEA:64376"/>
        <dbReference type="ChEBI" id="CHEBI:13193"/>
        <dbReference type="ChEBI" id="CHEBI:17499"/>
        <dbReference type="ChEBI" id="CHEBI:138139"/>
        <dbReference type="ChEBI" id="CHEBI:138140"/>
    </reaction>
    <physiologicalReaction direction="right-to-left" evidence="1">
        <dbReference type="Rhea" id="RHEA:64378"/>
    </physiologicalReaction>
</comment>
<comment type="catalytic activity">
    <reaction evidence="1">
        <text>2,3-bis-O-(phytanyl)-sn-glycerol 1-phosphate + 8 A = 2,3-bis-O-(geranylgeranyl)-sn-glycerol 1-phosphate + 8 AH2</text>
        <dbReference type="Rhea" id="RHEA:64368"/>
        <dbReference type="ChEBI" id="CHEBI:13193"/>
        <dbReference type="ChEBI" id="CHEBI:17499"/>
        <dbReference type="ChEBI" id="CHEBI:58837"/>
        <dbReference type="ChEBI" id="CHEBI:73125"/>
    </reaction>
    <physiologicalReaction direction="right-to-left" evidence="1">
        <dbReference type="Rhea" id="RHEA:64370"/>
    </physiologicalReaction>
</comment>
<comment type="catalytic activity">
    <reaction evidence="1">
        <text>CDP-2,3-bis-O-(geranylgeranyl)-sn-glycerol + 8 AH2 = CDP-2,3-bis-O-(phytanyl)-sn-glycerol + 8 A</text>
        <dbReference type="Rhea" id="RHEA:84207"/>
        <dbReference type="ChEBI" id="CHEBI:13193"/>
        <dbReference type="ChEBI" id="CHEBI:17499"/>
        <dbReference type="ChEBI" id="CHEBI:58838"/>
        <dbReference type="ChEBI" id="CHEBI:74004"/>
    </reaction>
    <physiologicalReaction direction="left-to-right" evidence="1">
        <dbReference type="Rhea" id="RHEA:84208"/>
    </physiologicalReaction>
</comment>
<comment type="catalytic activity">
    <reaction evidence="1">
        <text>archaetidylserine + 8 AH2 = 2,3-bis-O-phytanyl-sn-glycero-3-phospho-L-serine + 8 A</text>
        <dbReference type="Rhea" id="RHEA:84215"/>
        <dbReference type="ChEBI" id="CHEBI:13193"/>
        <dbReference type="ChEBI" id="CHEBI:17499"/>
        <dbReference type="ChEBI" id="CHEBI:71517"/>
        <dbReference type="ChEBI" id="CHEBI:74853"/>
    </reaction>
    <physiologicalReaction direction="left-to-right" evidence="1">
        <dbReference type="Rhea" id="RHEA:84216"/>
    </physiologicalReaction>
</comment>
<comment type="cofactor">
    <cofactor evidence="1">
        <name>FAD</name>
        <dbReference type="ChEBI" id="CHEBI:57692"/>
    </cofactor>
    <text evidence="1">Binds 1 FAD per subunit.</text>
</comment>
<comment type="pathway">
    <text evidence="1">Membrane lipid metabolism; glycerophospholipid metabolism.</text>
</comment>
<comment type="miscellaneous">
    <text evidence="1">Reduction reaction proceeds via syn addition of hydrogen for double bonds.</text>
</comment>
<comment type="similarity">
    <text evidence="1">Belongs to the geranylgeranyl reductase family. DGGGPL reductase subfamily.</text>
</comment>
<evidence type="ECO:0000255" key="1">
    <source>
        <dbReference type="HAMAP-Rule" id="MF_01287"/>
    </source>
</evidence>
<proteinExistence type="inferred from homology"/>
<reference key="1">
    <citation type="journal article" date="1996" name="Science">
        <title>Complete genome sequence of the methanogenic archaeon, Methanococcus jannaschii.</title>
        <authorList>
            <person name="Bult C.J."/>
            <person name="White O."/>
            <person name="Olsen G.J."/>
            <person name="Zhou L."/>
            <person name="Fleischmann R.D."/>
            <person name="Sutton G.G."/>
            <person name="Blake J.A."/>
            <person name="FitzGerald L.M."/>
            <person name="Clayton R.A."/>
            <person name="Gocayne J.D."/>
            <person name="Kerlavage A.R."/>
            <person name="Dougherty B.A."/>
            <person name="Tomb J.-F."/>
            <person name="Adams M.D."/>
            <person name="Reich C.I."/>
            <person name="Overbeek R."/>
            <person name="Kirkness E.F."/>
            <person name="Weinstock K.G."/>
            <person name="Merrick J.M."/>
            <person name="Glodek A."/>
            <person name="Scott J.L."/>
            <person name="Geoghagen N.S.M."/>
            <person name="Weidman J.F."/>
            <person name="Fuhrmann J.L."/>
            <person name="Nguyen D."/>
            <person name="Utterback T.R."/>
            <person name="Kelley J.M."/>
            <person name="Peterson J.D."/>
            <person name="Sadow P.W."/>
            <person name="Hanna M.C."/>
            <person name="Cotton M.D."/>
            <person name="Roberts K.M."/>
            <person name="Hurst M.A."/>
            <person name="Kaine B.P."/>
            <person name="Borodovsky M."/>
            <person name="Klenk H.-P."/>
            <person name="Fraser C.M."/>
            <person name="Smith H.O."/>
            <person name="Woese C.R."/>
            <person name="Venter J.C."/>
        </authorList>
    </citation>
    <scope>NUCLEOTIDE SEQUENCE [LARGE SCALE GENOMIC DNA]</scope>
    <source>
        <strain>ATCC 43067 / DSM 2661 / JAL-1 / JCM 10045 / NBRC 100440</strain>
    </source>
</reference>
<sequence>MRELNDVYDVVVVGAGPGGSMASYASAKNGAKTLLIEKSQEIGEPVRCAEAIPSIEEFGLKPEPEFVRNIIKGGILFSPSGKKVTVTQDKAQGYVVERKIFDKYLAIRAAKAGAKVAVKTTAIGLERDGDYWNVIVEFLGEEYVIKTKVVIAADGVESNIAEYAGLKAKKKPLEICSCAEYEMTNVELLDKNMMEFYFGNEVAPGGYVWIFPKGETANVGLGVRDKKKKAIEYLEEFIENGLAKDRLKDATPIEFKVGGAPVSGPIEKTYTDGLLVVGDAAGQISPLTGGGIYLAMDCGLIAGEVASKAIKLNDWSEETLKEYERRWKEKHYEYLMSHLKYRKILEKMSDDELDALAEALGESLDGIDLKKFVKRIITKKPSLLKYFKDLL</sequence>
<dbReference type="EC" id="1.3.-.-" evidence="1"/>
<dbReference type="EMBL" id="L77117">
    <property type="protein sequence ID" value="AAB98523.1"/>
    <property type="molecule type" value="Genomic_DNA"/>
</dbReference>
<dbReference type="PIR" id="D64366">
    <property type="entry name" value="D64366"/>
</dbReference>
<dbReference type="RefSeq" id="WP_010870036.1">
    <property type="nucleotide sequence ID" value="NC_000909.1"/>
</dbReference>
<dbReference type="SMR" id="Q57952"/>
<dbReference type="FunCoup" id="Q57952">
    <property type="interactions" value="62"/>
</dbReference>
<dbReference type="STRING" id="243232.MJ_0532"/>
<dbReference type="PaxDb" id="243232-MJ_0532"/>
<dbReference type="EnsemblBacteria" id="AAB98523">
    <property type="protein sequence ID" value="AAB98523"/>
    <property type="gene ID" value="MJ_0532"/>
</dbReference>
<dbReference type="GeneID" id="1451397"/>
<dbReference type="KEGG" id="mja:MJ_0532"/>
<dbReference type="eggNOG" id="arCOG00570">
    <property type="taxonomic scope" value="Archaea"/>
</dbReference>
<dbReference type="HOGENOM" id="CLU_024648_0_0_2"/>
<dbReference type="InParanoid" id="Q57952"/>
<dbReference type="OrthoDB" id="6062at2157"/>
<dbReference type="PhylomeDB" id="Q57952"/>
<dbReference type="UniPathway" id="UPA00940"/>
<dbReference type="Proteomes" id="UP000000805">
    <property type="component" value="Chromosome"/>
</dbReference>
<dbReference type="GO" id="GO:0016020">
    <property type="term" value="C:membrane"/>
    <property type="evidence" value="ECO:0007669"/>
    <property type="project" value="GOC"/>
</dbReference>
<dbReference type="GO" id="GO:0050660">
    <property type="term" value="F:flavin adenine dinucleotide binding"/>
    <property type="evidence" value="ECO:0007669"/>
    <property type="project" value="UniProtKB-UniRule"/>
</dbReference>
<dbReference type="GO" id="GO:0045550">
    <property type="term" value="F:geranylgeranyl reductase activity"/>
    <property type="evidence" value="ECO:0007669"/>
    <property type="project" value="InterPro"/>
</dbReference>
<dbReference type="GO" id="GO:0016628">
    <property type="term" value="F:oxidoreductase activity, acting on the CH-CH group of donors, NAD or NADP as acceptor"/>
    <property type="evidence" value="ECO:0007669"/>
    <property type="project" value="InterPro"/>
</dbReference>
<dbReference type="GO" id="GO:0046474">
    <property type="term" value="P:glycerophospholipid biosynthetic process"/>
    <property type="evidence" value="ECO:0007669"/>
    <property type="project" value="UniProtKB-UniRule"/>
</dbReference>
<dbReference type="GO" id="GO:0046467">
    <property type="term" value="P:membrane lipid biosynthetic process"/>
    <property type="evidence" value="ECO:0007669"/>
    <property type="project" value="InterPro"/>
</dbReference>
<dbReference type="Gene3D" id="3.30.9.10">
    <property type="entry name" value="D-Amino Acid Oxidase, subunit A, domain 2"/>
    <property type="match status" value="1"/>
</dbReference>
<dbReference type="Gene3D" id="3.50.50.60">
    <property type="entry name" value="FAD/NAD(P)-binding domain"/>
    <property type="match status" value="1"/>
</dbReference>
<dbReference type="HAMAP" id="MF_01287">
    <property type="entry name" value="DGGGPL_reductase"/>
    <property type="match status" value="1"/>
</dbReference>
<dbReference type="InterPro" id="IPR023590">
    <property type="entry name" value="DGGGPL_reductase"/>
</dbReference>
<dbReference type="InterPro" id="IPR036188">
    <property type="entry name" value="FAD/NAD-bd_sf"/>
</dbReference>
<dbReference type="InterPro" id="IPR011777">
    <property type="entry name" value="Geranylgeranyl_Rdtase_fam"/>
</dbReference>
<dbReference type="InterPro" id="IPR050407">
    <property type="entry name" value="Geranylgeranyl_reductase"/>
</dbReference>
<dbReference type="InterPro" id="IPR054715">
    <property type="entry name" value="GGR_cat"/>
</dbReference>
<dbReference type="NCBIfam" id="TIGR02032">
    <property type="entry name" value="GG-red-SF"/>
    <property type="match status" value="1"/>
</dbReference>
<dbReference type="PANTHER" id="PTHR42685:SF18">
    <property type="entry name" value="DIGERANYLGERANYLGLYCEROPHOSPHOLIPID REDUCTASE"/>
    <property type="match status" value="1"/>
</dbReference>
<dbReference type="PANTHER" id="PTHR42685">
    <property type="entry name" value="GERANYLGERANYL DIPHOSPHATE REDUCTASE"/>
    <property type="match status" value="1"/>
</dbReference>
<dbReference type="Pfam" id="PF12831">
    <property type="entry name" value="FAD_oxidored"/>
    <property type="match status" value="1"/>
</dbReference>
<dbReference type="Pfam" id="PF22578">
    <property type="entry name" value="GGR_cat"/>
    <property type="match status" value="1"/>
</dbReference>
<dbReference type="PRINTS" id="PR00420">
    <property type="entry name" value="RNGMNOXGNASE"/>
</dbReference>
<dbReference type="SUPFAM" id="SSF51905">
    <property type="entry name" value="FAD/NAD(P)-binding domain"/>
    <property type="match status" value="1"/>
</dbReference>
<gene>
    <name type="ordered locus">MJ0532</name>
</gene>